<gene>
    <name evidence="1" type="primary">ybeY</name>
    <name type="ordered locus">VCM66_0916</name>
</gene>
<proteinExistence type="inferred from homology"/>
<protein>
    <recommendedName>
        <fullName evidence="1">Endoribonuclease YbeY</fullName>
        <ecNumber evidence="1">3.1.-.-</ecNumber>
    </recommendedName>
</protein>
<name>YBEY_VIBCM</name>
<accession>C3LTK8</accession>
<organism>
    <name type="scientific">Vibrio cholerae serotype O1 (strain M66-2)</name>
    <dbReference type="NCBI Taxonomy" id="579112"/>
    <lineage>
        <taxon>Bacteria</taxon>
        <taxon>Pseudomonadati</taxon>
        <taxon>Pseudomonadota</taxon>
        <taxon>Gammaproteobacteria</taxon>
        <taxon>Vibrionales</taxon>
        <taxon>Vibrionaceae</taxon>
        <taxon>Vibrio</taxon>
    </lineage>
</organism>
<comment type="function">
    <text evidence="1">Single strand-specific metallo-endoribonuclease involved in late-stage 70S ribosome quality control and in maturation of the 3' terminus of the 16S rRNA.</text>
</comment>
<comment type="cofactor">
    <cofactor evidence="1">
        <name>Zn(2+)</name>
        <dbReference type="ChEBI" id="CHEBI:29105"/>
    </cofactor>
    <text evidence="1">Binds 1 zinc ion.</text>
</comment>
<comment type="subcellular location">
    <subcellularLocation>
        <location evidence="1">Cytoplasm</location>
    </subcellularLocation>
</comment>
<comment type="similarity">
    <text evidence="1">Belongs to the endoribonuclease YbeY family.</text>
</comment>
<evidence type="ECO:0000255" key="1">
    <source>
        <dbReference type="HAMAP-Rule" id="MF_00009"/>
    </source>
</evidence>
<reference key="1">
    <citation type="journal article" date="2008" name="PLoS ONE">
        <title>A recalibrated molecular clock and independent origins for the cholera pandemic clones.</title>
        <authorList>
            <person name="Feng L."/>
            <person name="Reeves P.R."/>
            <person name="Lan R."/>
            <person name="Ren Y."/>
            <person name="Gao C."/>
            <person name="Zhou Z."/>
            <person name="Ren Y."/>
            <person name="Cheng J."/>
            <person name="Wang W."/>
            <person name="Wang J."/>
            <person name="Qian W."/>
            <person name="Li D."/>
            <person name="Wang L."/>
        </authorList>
    </citation>
    <scope>NUCLEOTIDE SEQUENCE [LARGE SCALE GENOMIC DNA]</scope>
    <source>
        <strain>M66-2</strain>
    </source>
</reference>
<sequence>MSIELDLQLAVENEHGLPSEAEFALWLTRTITPFQAQAEVTVRIVDEAESHALNLNYRGKDKPTNVLSFPFEAPSGMEMDLLGDLVICRQVVEREAIEQNKPLQAHWAHMVVHGSLHLLGYDHIEDDEAEEMESLETEIMQEMGFTDPYLAEKE</sequence>
<dbReference type="EC" id="3.1.-.-" evidence="1"/>
<dbReference type="EMBL" id="CP001233">
    <property type="protein sequence ID" value="ACP05234.1"/>
    <property type="molecule type" value="Genomic_DNA"/>
</dbReference>
<dbReference type="RefSeq" id="WP_000021208.1">
    <property type="nucleotide sequence ID" value="NC_012578.1"/>
</dbReference>
<dbReference type="SMR" id="C3LTK8"/>
<dbReference type="KEGG" id="vcm:VCM66_0916"/>
<dbReference type="HOGENOM" id="CLU_106710_0_1_6"/>
<dbReference type="Proteomes" id="UP000001217">
    <property type="component" value="Chromosome I"/>
</dbReference>
<dbReference type="GO" id="GO:0005737">
    <property type="term" value="C:cytoplasm"/>
    <property type="evidence" value="ECO:0007669"/>
    <property type="project" value="UniProtKB-SubCell"/>
</dbReference>
<dbReference type="GO" id="GO:0004222">
    <property type="term" value="F:metalloendopeptidase activity"/>
    <property type="evidence" value="ECO:0007669"/>
    <property type="project" value="InterPro"/>
</dbReference>
<dbReference type="GO" id="GO:0004521">
    <property type="term" value="F:RNA endonuclease activity"/>
    <property type="evidence" value="ECO:0007669"/>
    <property type="project" value="UniProtKB-UniRule"/>
</dbReference>
<dbReference type="GO" id="GO:0008270">
    <property type="term" value="F:zinc ion binding"/>
    <property type="evidence" value="ECO:0007669"/>
    <property type="project" value="UniProtKB-UniRule"/>
</dbReference>
<dbReference type="GO" id="GO:0006364">
    <property type="term" value="P:rRNA processing"/>
    <property type="evidence" value="ECO:0007669"/>
    <property type="project" value="UniProtKB-UniRule"/>
</dbReference>
<dbReference type="Gene3D" id="3.40.390.30">
    <property type="entry name" value="Metalloproteases ('zincins'), catalytic domain"/>
    <property type="match status" value="1"/>
</dbReference>
<dbReference type="HAMAP" id="MF_00009">
    <property type="entry name" value="Endoribonucl_YbeY"/>
    <property type="match status" value="1"/>
</dbReference>
<dbReference type="InterPro" id="IPR023091">
    <property type="entry name" value="MetalPrtase_cat_dom_sf_prd"/>
</dbReference>
<dbReference type="InterPro" id="IPR002036">
    <property type="entry name" value="YbeY"/>
</dbReference>
<dbReference type="InterPro" id="IPR020549">
    <property type="entry name" value="YbeY_CS"/>
</dbReference>
<dbReference type="NCBIfam" id="TIGR00043">
    <property type="entry name" value="rRNA maturation RNase YbeY"/>
    <property type="match status" value="1"/>
</dbReference>
<dbReference type="PANTHER" id="PTHR46986">
    <property type="entry name" value="ENDORIBONUCLEASE YBEY, CHLOROPLASTIC"/>
    <property type="match status" value="1"/>
</dbReference>
<dbReference type="PANTHER" id="PTHR46986:SF1">
    <property type="entry name" value="ENDORIBONUCLEASE YBEY, CHLOROPLASTIC"/>
    <property type="match status" value="1"/>
</dbReference>
<dbReference type="Pfam" id="PF02130">
    <property type="entry name" value="YbeY"/>
    <property type="match status" value="1"/>
</dbReference>
<dbReference type="SUPFAM" id="SSF55486">
    <property type="entry name" value="Metalloproteases ('zincins'), catalytic domain"/>
    <property type="match status" value="1"/>
</dbReference>
<dbReference type="PROSITE" id="PS01306">
    <property type="entry name" value="UPF0054"/>
    <property type="match status" value="1"/>
</dbReference>
<keyword id="KW-0963">Cytoplasm</keyword>
<keyword id="KW-0255">Endonuclease</keyword>
<keyword id="KW-0378">Hydrolase</keyword>
<keyword id="KW-0479">Metal-binding</keyword>
<keyword id="KW-0540">Nuclease</keyword>
<keyword id="KW-0690">Ribosome biogenesis</keyword>
<keyword id="KW-0698">rRNA processing</keyword>
<keyword id="KW-0862">Zinc</keyword>
<feature type="chain" id="PRO_1000200006" description="Endoribonuclease YbeY">
    <location>
        <begin position="1"/>
        <end position="154"/>
    </location>
</feature>
<feature type="binding site" evidence="1">
    <location>
        <position position="113"/>
    </location>
    <ligand>
        <name>Zn(2+)</name>
        <dbReference type="ChEBI" id="CHEBI:29105"/>
        <note>catalytic</note>
    </ligand>
</feature>
<feature type="binding site" evidence="1">
    <location>
        <position position="117"/>
    </location>
    <ligand>
        <name>Zn(2+)</name>
        <dbReference type="ChEBI" id="CHEBI:29105"/>
        <note>catalytic</note>
    </ligand>
</feature>
<feature type="binding site" evidence="1">
    <location>
        <position position="123"/>
    </location>
    <ligand>
        <name>Zn(2+)</name>
        <dbReference type="ChEBI" id="CHEBI:29105"/>
        <note>catalytic</note>
    </ligand>
</feature>